<accession>Q5HM92</accession>
<feature type="chain" id="PRO_0000261353" description="Type II pantothenate kinase">
    <location>
        <begin position="1"/>
        <end position="265"/>
    </location>
</feature>
<feature type="active site" description="Proton acceptor" evidence="1">
    <location>
        <position position="70"/>
    </location>
</feature>
<feature type="binding site" evidence="1">
    <location>
        <begin position="6"/>
        <end position="13"/>
    </location>
    <ligand>
        <name>ATP</name>
        <dbReference type="ChEBI" id="CHEBI:30616"/>
    </ligand>
</feature>
<feature type="binding site" evidence="1">
    <location>
        <position position="99"/>
    </location>
    <ligand>
        <name>ATP</name>
        <dbReference type="ChEBI" id="CHEBI:30616"/>
    </ligand>
</feature>
<feature type="binding site" evidence="1">
    <location>
        <begin position="121"/>
        <end position="125"/>
    </location>
    <ligand>
        <name>ATP</name>
        <dbReference type="ChEBI" id="CHEBI:30616"/>
    </ligand>
</feature>
<feature type="binding site" evidence="1">
    <location>
        <position position="137"/>
    </location>
    <ligand>
        <name>ATP</name>
        <dbReference type="ChEBI" id="CHEBI:30616"/>
    </ligand>
</feature>
<feature type="binding site" evidence="1">
    <location>
        <position position="225"/>
    </location>
    <ligand>
        <name>ATP</name>
        <dbReference type="ChEBI" id="CHEBI:30616"/>
    </ligand>
</feature>
<reference key="1">
    <citation type="journal article" date="2005" name="J. Bacteriol.">
        <title>Insights on evolution of virulence and resistance from the complete genome analysis of an early methicillin-resistant Staphylococcus aureus strain and a biofilm-producing methicillin-resistant Staphylococcus epidermidis strain.</title>
        <authorList>
            <person name="Gill S.R."/>
            <person name="Fouts D.E."/>
            <person name="Archer G.L."/>
            <person name="Mongodin E.F."/>
            <person name="DeBoy R.T."/>
            <person name="Ravel J."/>
            <person name="Paulsen I.T."/>
            <person name="Kolonay J.F."/>
            <person name="Brinkac L.M."/>
            <person name="Beanan M.J."/>
            <person name="Dodson R.J."/>
            <person name="Daugherty S.C."/>
            <person name="Madupu R."/>
            <person name="Angiuoli S.V."/>
            <person name="Durkin A.S."/>
            <person name="Haft D.H."/>
            <person name="Vamathevan J.J."/>
            <person name="Khouri H."/>
            <person name="Utterback T.R."/>
            <person name="Lee C."/>
            <person name="Dimitrov G."/>
            <person name="Jiang L."/>
            <person name="Qin H."/>
            <person name="Weidman J."/>
            <person name="Tran K."/>
            <person name="Kang K.H."/>
            <person name="Hance I.R."/>
            <person name="Nelson K.E."/>
            <person name="Fraser C.M."/>
        </authorList>
    </citation>
    <scope>NUCLEOTIDE SEQUENCE [LARGE SCALE GENOMIC DNA]</scope>
    <source>
        <strain>ATCC 35984 / DSM 28319 / BCRC 17069 / CCUG 31568 / BM 3577 / RP62A</strain>
    </source>
</reference>
<proteinExistence type="inferred from homology"/>
<name>COAW_STAEQ</name>
<protein>
    <recommendedName>
        <fullName evidence="1">Type II pantothenate kinase</fullName>
        <ecNumber evidence="1">2.7.1.33</ecNumber>
    </recommendedName>
    <alternativeName>
        <fullName evidence="1">PanK-II</fullName>
    </alternativeName>
    <alternativeName>
        <fullName evidence="1">Pantothenic acid kinase</fullName>
    </alternativeName>
</protein>
<keyword id="KW-0067">ATP-binding</keyword>
<keyword id="KW-0173">Coenzyme A biosynthesis</keyword>
<keyword id="KW-0963">Cytoplasm</keyword>
<keyword id="KW-0418">Kinase</keyword>
<keyword id="KW-0547">Nucleotide-binding</keyword>
<keyword id="KW-1185">Reference proteome</keyword>
<keyword id="KW-0808">Transferase</keyword>
<dbReference type="EC" id="2.7.1.33" evidence="1"/>
<dbReference type="EMBL" id="CP000029">
    <property type="protein sequence ID" value="AAW55059.1"/>
    <property type="molecule type" value="Genomic_DNA"/>
</dbReference>
<dbReference type="RefSeq" id="WP_001829975.1">
    <property type="nucleotide sequence ID" value="NC_002976.3"/>
</dbReference>
<dbReference type="SMR" id="Q5HM92"/>
<dbReference type="STRING" id="176279.SERP1737"/>
<dbReference type="KEGG" id="ser:SERP1737"/>
<dbReference type="eggNOG" id="COG5146">
    <property type="taxonomic scope" value="Bacteria"/>
</dbReference>
<dbReference type="HOGENOM" id="CLU_087521_1_0_9"/>
<dbReference type="UniPathway" id="UPA00241">
    <property type="reaction ID" value="UER00352"/>
</dbReference>
<dbReference type="Proteomes" id="UP000000531">
    <property type="component" value="Chromosome"/>
</dbReference>
<dbReference type="GO" id="GO:0005829">
    <property type="term" value="C:cytosol"/>
    <property type="evidence" value="ECO:0007669"/>
    <property type="project" value="TreeGrafter"/>
</dbReference>
<dbReference type="GO" id="GO:0005524">
    <property type="term" value="F:ATP binding"/>
    <property type="evidence" value="ECO:0007669"/>
    <property type="project" value="UniProtKB-UniRule"/>
</dbReference>
<dbReference type="GO" id="GO:0004594">
    <property type="term" value="F:pantothenate kinase activity"/>
    <property type="evidence" value="ECO:0007669"/>
    <property type="project" value="UniProtKB-UniRule"/>
</dbReference>
<dbReference type="GO" id="GO:0015937">
    <property type="term" value="P:coenzyme A biosynthetic process"/>
    <property type="evidence" value="ECO:0007669"/>
    <property type="project" value="UniProtKB-UniRule"/>
</dbReference>
<dbReference type="Gene3D" id="3.30.420.40">
    <property type="match status" value="1"/>
</dbReference>
<dbReference type="HAMAP" id="MF_01273">
    <property type="entry name" value="Pantothen_kinase_2"/>
    <property type="match status" value="1"/>
</dbReference>
<dbReference type="InterPro" id="IPR043129">
    <property type="entry name" value="ATPase_NBD"/>
</dbReference>
<dbReference type="InterPro" id="IPR004567">
    <property type="entry name" value="Type_II_PanK"/>
</dbReference>
<dbReference type="InterPro" id="IPR011602">
    <property type="entry name" value="Type_II_PanK_bac"/>
</dbReference>
<dbReference type="NCBIfam" id="TIGR00555">
    <property type="entry name" value="panK_eukar"/>
    <property type="match status" value="1"/>
</dbReference>
<dbReference type="NCBIfam" id="NF009842">
    <property type="entry name" value="PRK13317.1"/>
    <property type="match status" value="1"/>
</dbReference>
<dbReference type="PANTHER" id="PTHR12280:SF20">
    <property type="entry name" value="4'-PHOSPHOPANTETHEINE PHOSPHATASE"/>
    <property type="match status" value="1"/>
</dbReference>
<dbReference type="PANTHER" id="PTHR12280">
    <property type="entry name" value="PANTOTHENATE KINASE"/>
    <property type="match status" value="1"/>
</dbReference>
<dbReference type="Pfam" id="PF03630">
    <property type="entry name" value="Fumble"/>
    <property type="match status" value="1"/>
</dbReference>
<dbReference type="PIRSF" id="PIRSF036940">
    <property type="entry name" value="PanK_bac_aCoA"/>
    <property type="match status" value="1"/>
</dbReference>
<dbReference type="SUPFAM" id="SSF53067">
    <property type="entry name" value="Actin-like ATPase domain"/>
    <property type="match status" value="1"/>
</dbReference>
<gene>
    <name evidence="1" type="primary">coaW</name>
    <name type="ordered locus">SERP1737</name>
</gene>
<organism>
    <name type="scientific">Staphylococcus epidermidis (strain ATCC 35984 / DSM 28319 / BCRC 17069 / CCUG 31568 / BM 3577 / RP62A)</name>
    <dbReference type="NCBI Taxonomy" id="176279"/>
    <lineage>
        <taxon>Bacteria</taxon>
        <taxon>Bacillati</taxon>
        <taxon>Bacillota</taxon>
        <taxon>Bacilli</taxon>
        <taxon>Bacillales</taxon>
        <taxon>Staphylococcaceae</taxon>
        <taxon>Staphylococcus</taxon>
    </lineage>
</organism>
<comment type="function">
    <text evidence="1">Catalyzes the phosphorylation of pantothenate (Pan), the first step in CoA biosynthesis.</text>
</comment>
<comment type="catalytic activity">
    <reaction evidence="1">
        <text>(R)-pantothenate + ATP = (R)-4'-phosphopantothenate + ADP + H(+)</text>
        <dbReference type="Rhea" id="RHEA:16373"/>
        <dbReference type="ChEBI" id="CHEBI:10986"/>
        <dbReference type="ChEBI" id="CHEBI:15378"/>
        <dbReference type="ChEBI" id="CHEBI:29032"/>
        <dbReference type="ChEBI" id="CHEBI:30616"/>
        <dbReference type="ChEBI" id="CHEBI:456216"/>
        <dbReference type="EC" id="2.7.1.33"/>
    </reaction>
</comment>
<comment type="pathway">
    <text evidence="1">Cofactor biosynthesis; coenzyme A biosynthesis; CoA from (R)-pantothenate: step 1/5.</text>
</comment>
<comment type="subunit">
    <text evidence="1">Homodimer.</text>
</comment>
<comment type="subcellular location">
    <subcellularLocation>
        <location evidence="1">Cytoplasm</location>
    </subcellularLocation>
</comment>
<comment type="similarity">
    <text evidence="1">Belongs to the type II pantothenate kinase family.</text>
</comment>
<sequence>MKIGIDAGGTLIKIVQEHDNRRYYRTELTTNIQKVIDWLNNEEIETLKLTGGNAGVIADQIHHSPEIFVEFDASSKGLEILLDEQGHQIEHYIFANVGTGTSFHYFDGKDQQRVGGVGTGGGMIQGLGYLLSNITDYKELTNLAQNGDRDAIDLKVKHIYKDTEPPIPGDLTAANFGNVLHHLDNQFTSANKLASAIGVVGEVITTMAITLAREYKTKHVVYIGSSFNNNQLLREVVENYTVLRGFKPYYIENGAFSGALGALYL</sequence>
<evidence type="ECO:0000255" key="1">
    <source>
        <dbReference type="HAMAP-Rule" id="MF_01273"/>
    </source>
</evidence>